<feature type="chain" id="PRO_0000129259" description="Large ribosomal subunit protein uL4">
    <location>
        <begin position="1"/>
        <end position="200"/>
    </location>
</feature>
<feature type="region of interest" description="Disordered" evidence="2">
    <location>
        <begin position="38"/>
        <end position="67"/>
    </location>
</feature>
<gene>
    <name type="primary">rplD</name>
    <name type="ordered locus">PA4262</name>
</gene>
<accession>Q9HWD6</accession>
<proteinExistence type="evidence at protein level"/>
<comment type="function">
    <text evidence="1">One of the primary rRNA binding proteins, this protein initially binds near the 5'-end of the 23S rRNA. It is important during the early stages of 50S assembly. It makes multiple contacts with different domains of the 23S rRNA in the assembled 50S subunit and ribosome (By similarity).</text>
</comment>
<comment type="function">
    <text>The P.aeruginosa S10 leader is not regulated by the E.coli L4 protein. This and other data strongly suggest the S10 operon is regulated differently than in E.coli.</text>
</comment>
<comment type="function">
    <text evidence="1">Forms part of the polypeptide exit tunnel.</text>
</comment>
<comment type="subunit">
    <text evidence="1">Part of the 50S ribosomal subunit.</text>
</comment>
<comment type="similarity">
    <text evidence="3">Belongs to the universal ribosomal protein uL4 family.</text>
</comment>
<sequence>MQLNVNGAQAIEVSERTFGGEFNETLVHQAVVAYMAGGRQGSKAQKTRSEVSGGGKKPWRQKGTGRARAGTIRSPIWRGGGTTFAAKPRSHEQKLNKKMYRAALRSILAELVRLDRLVVVADFAVDAPKTKGLVAKLDTLGLKDVLIVTDGVDENLYLAARNLAHVDVRDVQGSDPVSLIAYDKVLVTVSAVKKFEELLG</sequence>
<dbReference type="EMBL" id="AE004091">
    <property type="protein sequence ID" value="AAG07650.1"/>
    <property type="molecule type" value="Genomic_DNA"/>
</dbReference>
<dbReference type="PIR" id="D83116">
    <property type="entry name" value="D83116"/>
</dbReference>
<dbReference type="RefSeq" id="NP_252952.1">
    <property type="nucleotide sequence ID" value="NC_002516.2"/>
</dbReference>
<dbReference type="RefSeq" id="WP_003093737.1">
    <property type="nucleotide sequence ID" value="NZ_QZGE01000028.1"/>
</dbReference>
<dbReference type="PDB" id="7UNR">
    <property type="method" value="EM"/>
    <property type="resolution" value="2.90 A"/>
    <property type="chains" value="E=1-200"/>
</dbReference>
<dbReference type="PDB" id="7UNU">
    <property type="method" value="EM"/>
    <property type="resolution" value="2.90 A"/>
    <property type="chains" value="E=1-200"/>
</dbReference>
<dbReference type="PDB" id="7UNV">
    <property type="method" value="EM"/>
    <property type="resolution" value="2.70 A"/>
    <property type="chains" value="E=1-200"/>
</dbReference>
<dbReference type="PDB" id="7UNW">
    <property type="method" value="EM"/>
    <property type="resolution" value="2.60 A"/>
    <property type="chains" value="E=1-200"/>
</dbReference>
<dbReference type="PDB" id="8CD1">
    <property type="method" value="EM"/>
    <property type="resolution" value="3.00 A"/>
    <property type="chains" value="E=1-200"/>
</dbReference>
<dbReference type="PDB" id="8RWG">
    <property type="method" value="EM"/>
    <property type="resolution" value="2.46 A"/>
    <property type="chains" value="F=1-200"/>
</dbReference>
<dbReference type="PDBsum" id="7UNR"/>
<dbReference type="PDBsum" id="7UNU"/>
<dbReference type="PDBsum" id="7UNV"/>
<dbReference type="PDBsum" id="7UNW"/>
<dbReference type="PDBsum" id="8CD1"/>
<dbReference type="PDBsum" id="8RWG"/>
<dbReference type="EMDB" id="EMD-16566"/>
<dbReference type="EMDB" id="EMD-19547"/>
<dbReference type="EMDB" id="EMD-26630"/>
<dbReference type="EMDB" id="EMD-26633"/>
<dbReference type="EMDB" id="EMD-26634"/>
<dbReference type="EMDB" id="EMD-26635"/>
<dbReference type="SMR" id="Q9HWD6"/>
<dbReference type="FunCoup" id="Q9HWD6">
    <property type="interactions" value="979"/>
</dbReference>
<dbReference type="STRING" id="208964.PA4262"/>
<dbReference type="PaxDb" id="208964-PA4262"/>
<dbReference type="DNASU" id="881754"/>
<dbReference type="GeneID" id="77219199"/>
<dbReference type="GeneID" id="881754"/>
<dbReference type="KEGG" id="pae:PA4262"/>
<dbReference type="PATRIC" id="fig|208964.12.peg.4463"/>
<dbReference type="PseudoCAP" id="PA4262"/>
<dbReference type="HOGENOM" id="CLU_041575_5_2_6"/>
<dbReference type="InParanoid" id="Q9HWD6"/>
<dbReference type="OrthoDB" id="9803201at2"/>
<dbReference type="PhylomeDB" id="Q9HWD6"/>
<dbReference type="BioCyc" id="PAER208964:G1FZ6-4335-MONOMER"/>
<dbReference type="PRO" id="PR:Q9HWD6"/>
<dbReference type="Proteomes" id="UP000002438">
    <property type="component" value="Chromosome"/>
</dbReference>
<dbReference type="GO" id="GO:1990904">
    <property type="term" value="C:ribonucleoprotein complex"/>
    <property type="evidence" value="ECO:0007669"/>
    <property type="project" value="UniProtKB-KW"/>
</dbReference>
<dbReference type="GO" id="GO:0005840">
    <property type="term" value="C:ribosome"/>
    <property type="evidence" value="ECO:0007669"/>
    <property type="project" value="UniProtKB-KW"/>
</dbReference>
<dbReference type="GO" id="GO:0019843">
    <property type="term" value="F:rRNA binding"/>
    <property type="evidence" value="ECO:0007669"/>
    <property type="project" value="UniProtKB-UniRule"/>
</dbReference>
<dbReference type="GO" id="GO:0003735">
    <property type="term" value="F:structural constituent of ribosome"/>
    <property type="evidence" value="ECO:0000318"/>
    <property type="project" value="GO_Central"/>
</dbReference>
<dbReference type="GO" id="GO:0006412">
    <property type="term" value="P:translation"/>
    <property type="evidence" value="ECO:0007669"/>
    <property type="project" value="UniProtKB-UniRule"/>
</dbReference>
<dbReference type="FunFam" id="3.40.1370.10:FF:000001">
    <property type="entry name" value="50S ribosomal protein L4"/>
    <property type="match status" value="1"/>
</dbReference>
<dbReference type="Gene3D" id="3.40.1370.10">
    <property type="match status" value="1"/>
</dbReference>
<dbReference type="HAMAP" id="MF_01328_B">
    <property type="entry name" value="Ribosomal_uL4_B"/>
    <property type="match status" value="1"/>
</dbReference>
<dbReference type="InterPro" id="IPR002136">
    <property type="entry name" value="Ribosomal_uL4"/>
</dbReference>
<dbReference type="InterPro" id="IPR013005">
    <property type="entry name" value="Ribosomal_uL4-like"/>
</dbReference>
<dbReference type="InterPro" id="IPR023574">
    <property type="entry name" value="Ribosomal_uL4_dom_sf"/>
</dbReference>
<dbReference type="NCBIfam" id="TIGR03953">
    <property type="entry name" value="rplD_bact"/>
    <property type="match status" value="1"/>
</dbReference>
<dbReference type="PANTHER" id="PTHR10746">
    <property type="entry name" value="50S RIBOSOMAL PROTEIN L4"/>
    <property type="match status" value="1"/>
</dbReference>
<dbReference type="PANTHER" id="PTHR10746:SF6">
    <property type="entry name" value="LARGE RIBOSOMAL SUBUNIT PROTEIN UL4M"/>
    <property type="match status" value="1"/>
</dbReference>
<dbReference type="Pfam" id="PF00573">
    <property type="entry name" value="Ribosomal_L4"/>
    <property type="match status" value="1"/>
</dbReference>
<dbReference type="SUPFAM" id="SSF52166">
    <property type="entry name" value="Ribosomal protein L4"/>
    <property type="match status" value="1"/>
</dbReference>
<evidence type="ECO:0000250" key="1"/>
<evidence type="ECO:0000256" key="2">
    <source>
        <dbReference type="SAM" id="MobiDB-lite"/>
    </source>
</evidence>
<evidence type="ECO:0000305" key="3"/>
<organism>
    <name type="scientific">Pseudomonas aeruginosa (strain ATCC 15692 / DSM 22644 / CIP 104116 / JCM 14847 / LMG 12228 / 1C / PRS 101 / PAO1)</name>
    <dbReference type="NCBI Taxonomy" id="208964"/>
    <lineage>
        <taxon>Bacteria</taxon>
        <taxon>Pseudomonadati</taxon>
        <taxon>Pseudomonadota</taxon>
        <taxon>Gammaproteobacteria</taxon>
        <taxon>Pseudomonadales</taxon>
        <taxon>Pseudomonadaceae</taxon>
        <taxon>Pseudomonas</taxon>
    </lineage>
</organism>
<protein>
    <recommendedName>
        <fullName evidence="3">Large ribosomal subunit protein uL4</fullName>
    </recommendedName>
    <alternativeName>
        <fullName>50S ribosomal protein L4</fullName>
    </alternativeName>
</protein>
<name>RL4_PSEAE</name>
<keyword id="KW-0002">3D-structure</keyword>
<keyword id="KW-1185">Reference proteome</keyword>
<keyword id="KW-0687">Ribonucleoprotein</keyword>
<keyword id="KW-0689">Ribosomal protein</keyword>
<keyword id="KW-0694">RNA-binding</keyword>
<keyword id="KW-0699">rRNA-binding</keyword>
<reference key="1">
    <citation type="journal article" date="2000" name="Nature">
        <title>Complete genome sequence of Pseudomonas aeruginosa PAO1, an opportunistic pathogen.</title>
        <authorList>
            <person name="Stover C.K."/>
            <person name="Pham X.-Q.T."/>
            <person name="Erwin A.L."/>
            <person name="Mizoguchi S.D."/>
            <person name="Warrener P."/>
            <person name="Hickey M.J."/>
            <person name="Brinkman F.S.L."/>
            <person name="Hufnagle W.O."/>
            <person name="Kowalik D.J."/>
            <person name="Lagrou M."/>
            <person name="Garber R.L."/>
            <person name="Goltry L."/>
            <person name="Tolentino E."/>
            <person name="Westbrock-Wadman S."/>
            <person name="Yuan Y."/>
            <person name="Brody L.L."/>
            <person name="Coulter S.N."/>
            <person name="Folger K.R."/>
            <person name="Kas A."/>
            <person name="Larbig K."/>
            <person name="Lim R.M."/>
            <person name="Smith K.A."/>
            <person name="Spencer D.H."/>
            <person name="Wong G.K.-S."/>
            <person name="Wu Z."/>
            <person name="Paulsen I.T."/>
            <person name="Reizer J."/>
            <person name="Saier M.H. Jr."/>
            <person name="Hancock R.E.W."/>
            <person name="Lory S."/>
            <person name="Olson M.V."/>
        </authorList>
    </citation>
    <scope>NUCLEOTIDE SEQUENCE [LARGE SCALE GENOMIC DNA]</scope>
    <source>
        <strain>ATCC 15692 / DSM 22644 / CIP 104116 / JCM 14847 / LMG 12228 / 1C / PRS 101 / PAO1</strain>
    </source>
</reference>
<reference key="2">
    <citation type="journal article" date="1999" name="J. Bacteriol.">
        <title>Phylogenetic analysis of L4-mediated autogenous control of the S10 ribosomal protein operon.</title>
        <authorList>
            <person name="Allen T."/>
            <person name="Shen P."/>
            <person name="Samsel L."/>
            <person name="Liu R."/>
            <person name="Lindahl L."/>
            <person name="Zengel J.M."/>
        </authorList>
    </citation>
    <scope>DOES NOT REGULATE THE E.COLI S10 OPERON</scope>
</reference>